<feature type="chain" id="PRO_0000180764" description="Glucose-6-phosphate isomerase">
    <location>
        <begin position="1"/>
        <end position="550"/>
    </location>
</feature>
<feature type="active site" description="Proton donor" evidence="1">
    <location>
        <position position="356"/>
    </location>
</feature>
<feature type="active site" evidence="1">
    <location>
        <position position="387"/>
    </location>
</feature>
<feature type="active site" evidence="1">
    <location>
        <position position="515"/>
    </location>
</feature>
<accession>Q87L81</accession>
<protein>
    <recommendedName>
        <fullName evidence="1">Glucose-6-phosphate isomerase</fullName>
        <shortName evidence="1">GPI</shortName>
        <ecNumber evidence="1">5.3.1.9</ecNumber>
    </recommendedName>
    <alternativeName>
        <fullName evidence="1">Phosphoglucose isomerase</fullName>
        <shortName evidence="1">PGI</shortName>
    </alternativeName>
    <alternativeName>
        <fullName evidence="1">Phosphohexose isomerase</fullName>
        <shortName evidence="1">PHI</shortName>
    </alternativeName>
</protein>
<organism>
    <name type="scientific">Vibrio parahaemolyticus serotype O3:K6 (strain RIMD 2210633)</name>
    <dbReference type="NCBI Taxonomy" id="223926"/>
    <lineage>
        <taxon>Bacteria</taxon>
        <taxon>Pseudomonadati</taxon>
        <taxon>Pseudomonadota</taxon>
        <taxon>Gammaproteobacteria</taxon>
        <taxon>Vibrionales</taxon>
        <taxon>Vibrionaceae</taxon>
        <taxon>Vibrio</taxon>
    </lineage>
</organism>
<reference key="1">
    <citation type="journal article" date="2003" name="Lancet">
        <title>Genome sequence of Vibrio parahaemolyticus: a pathogenic mechanism distinct from that of V. cholerae.</title>
        <authorList>
            <person name="Makino K."/>
            <person name="Oshima K."/>
            <person name="Kurokawa K."/>
            <person name="Yokoyama K."/>
            <person name="Uda T."/>
            <person name="Tagomori K."/>
            <person name="Iijima Y."/>
            <person name="Najima M."/>
            <person name="Nakano M."/>
            <person name="Yamashita A."/>
            <person name="Kubota Y."/>
            <person name="Kimura S."/>
            <person name="Yasunaga T."/>
            <person name="Honda T."/>
            <person name="Shinagawa H."/>
            <person name="Hattori M."/>
            <person name="Iida T."/>
        </authorList>
    </citation>
    <scope>NUCLEOTIDE SEQUENCE [LARGE SCALE GENOMIC DNA]</scope>
    <source>
        <strain>RIMD 2210633</strain>
    </source>
</reference>
<comment type="function">
    <text evidence="1">Catalyzes the reversible isomerization of glucose-6-phosphate to fructose-6-phosphate.</text>
</comment>
<comment type="catalytic activity">
    <reaction evidence="1">
        <text>alpha-D-glucose 6-phosphate = beta-D-fructose 6-phosphate</text>
        <dbReference type="Rhea" id="RHEA:11816"/>
        <dbReference type="ChEBI" id="CHEBI:57634"/>
        <dbReference type="ChEBI" id="CHEBI:58225"/>
        <dbReference type="EC" id="5.3.1.9"/>
    </reaction>
</comment>
<comment type="pathway">
    <text evidence="1">Carbohydrate biosynthesis; gluconeogenesis.</text>
</comment>
<comment type="pathway">
    <text evidence="1">Carbohydrate degradation; glycolysis; D-glyceraldehyde 3-phosphate and glycerone phosphate from D-glucose: step 2/4.</text>
</comment>
<comment type="subcellular location">
    <subcellularLocation>
        <location evidence="1">Cytoplasm</location>
    </subcellularLocation>
</comment>
<comment type="similarity">
    <text evidence="1">Belongs to the GPI family.</text>
</comment>
<dbReference type="EC" id="5.3.1.9" evidence="1"/>
<dbReference type="EMBL" id="BA000031">
    <property type="protein sequence ID" value="BAC60994.1"/>
    <property type="molecule type" value="Genomic_DNA"/>
</dbReference>
<dbReference type="RefSeq" id="NP_799110.1">
    <property type="nucleotide sequence ID" value="NC_004603.1"/>
</dbReference>
<dbReference type="RefSeq" id="WP_005455828.1">
    <property type="nucleotide sequence ID" value="NC_004603.1"/>
</dbReference>
<dbReference type="SMR" id="Q87L81"/>
<dbReference type="GeneID" id="1190281"/>
<dbReference type="KEGG" id="vpa:VP2731"/>
<dbReference type="PATRIC" id="fig|223926.6.peg.2628"/>
<dbReference type="eggNOG" id="COG0166">
    <property type="taxonomic scope" value="Bacteria"/>
</dbReference>
<dbReference type="HOGENOM" id="CLU_017947_3_1_6"/>
<dbReference type="UniPathway" id="UPA00109">
    <property type="reaction ID" value="UER00181"/>
</dbReference>
<dbReference type="UniPathway" id="UPA00138"/>
<dbReference type="Proteomes" id="UP000002493">
    <property type="component" value="Chromosome 1"/>
</dbReference>
<dbReference type="GO" id="GO:0005829">
    <property type="term" value="C:cytosol"/>
    <property type="evidence" value="ECO:0007669"/>
    <property type="project" value="TreeGrafter"/>
</dbReference>
<dbReference type="GO" id="GO:0097367">
    <property type="term" value="F:carbohydrate derivative binding"/>
    <property type="evidence" value="ECO:0007669"/>
    <property type="project" value="InterPro"/>
</dbReference>
<dbReference type="GO" id="GO:0004347">
    <property type="term" value="F:glucose-6-phosphate isomerase activity"/>
    <property type="evidence" value="ECO:0007669"/>
    <property type="project" value="UniProtKB-UniRule"/>
</dbReference>
<dbReference type="GO" id="GO:0048029">
    <property type="term" value="F:monosaccharide binding"/>
    <property type="evidence" value="ECO:0007669"/>
    <property type="project" value="TreeGrafter"/>
</dbReference>
<dbReference type="GO" id="GO:0006094">
    <property type="term" value="P:gluconeogenesis"/>
    <property type="evidence" value="ECO:0007669"/>
    <property type="project" value="UniProtKB-UniRule"/>
</dbReference>
<dbReference type="GO" id="GO:0051156">
    <property type="term" value="P:glucose 6-phosphate metabolic process"/>
    <property type="evidence" value="ECO:0007669"/>
    <property type="project" value="TreeGrafter"/>
</dbReference>
<dbReference type="GO" id="GO:0006096">
    <property type="term" value="P:glycolytic process"/>
    <property type="evidence" value="ECO:0007669"/>
    <property type="project" value="UniProtKB-UniRule"/>
</dbReference>
<dbReference type="CDD" id="cd05015">
    <property type="entry name" value="SIS_PGI_1"/>
    <property type="match status" value="1"/>
</dbReference>
<dbReference type="CDD" id="cd05016">
    <property type="entry name" value="SIS_PGI_2"/>
    <property type="match status" value="1"/>
</dbReference>
<dbReference type="FunFam" id="1.10.1390.10:FF:000001">
    <property type="entry name" value="Glucose-6-phosphate isomerase"/>
    <property type="match status" value="1"/>
</dbReference>
<dbReference type="FunFam" id="3.40.50.10490:FF:000004">
    <property type="entry name" value="Glucose-6-phosphate isomerase"/>
    <property type="match status" value="1"/>
</dbReference>
<dbReference type="Gene3D" id="1.10.1390.10">
    <property type="match status" value="1"/>
</dbReference>
<dbReference type="Gene3D" id="3.40.50.10490">
    <property type="entry name" value="Glucose-6-phosphate isomerase like protein, domain 1"/>
    <property type="match status" value="2"/>
</dbReference>
<dbReference type="HAMAP" id="MF_00473">
    <property type="entry name" value="G6P_isomerase"/>
    <property type="match status" value="1"/>
</dbReference>
<dbReference type="InterPro" id="IPR001672">
    <property type="entry name" value="G6P_Isomerase"/>
</dbReference>
<dbReference type="InterPro" id="IPR023096">
    <property type="entry name" value="G6P_Isomerase_C"/>
</dbReference>
<dbReference type="InterPro" id="IPR018189">
    <property type="entry name" value="Phosphoglucose_isomerase_CS"/>
</dbReference>
<dbReference type="InterPro" id="IPR046348">
    <property type="entry name" value="SIS_dom_sf"/>
</dbReference>
<dbReference type="InterPro" id="IPR035476">
    <property type="entry name" value="SIS_PGI_1"/>
</dbReference>
<dbReference type="InterPro" id="IPR035482">
    <property type="entry name" value="SIS_PGI_2"/>
</dbReference>
<dbReference type="NCBIfam" id="NF001211">
    <property type="entry name" value="PRK00179.1"/>
    <property type="match status" value="1"/>
</dbReference>
<dbReference type="PANTHER" id="PTHR11469">
    <property type="entry name" value="GLUCOSE-6-PHOSPHATE ISOMERASE"/>
    <property type="match status" value="1"/>
</dbReference>
<dbReference type="PANTHER" id="PTHR11469:SF1">
    <property type="entry name" value="GLUCOSE-6-PHOSPHATE ISOMERASE"/>
    <property type="match status" value="1"/>
</dbReference>
<dbReference type="Pfam" id="PF00342">
    <property type="entry name" value="PGI"/>
    <property type="match status" value="1"/>
</dbReference>
<dbReference type="PRINTS" id="PR00662">
    <property type="entry name" value="G6PISOMERASE"/>
</dbReference>
<dbReference type="SUPFAM" id="SSF53697">
    <property type="entry name" value="SIS domain"/>
    <property type="match status" value="1"/>
</dbReference>
<dbReference type="PROSITE" id="PS00765">
    <property type="entry name" value="P_GLUCOSE_ISOMERASE_1"/>
    <property type="match status" value="1"/>
</dbReference>
<dbReference type="PROSITE" id="PS00174">
    <property type="entry name" value="P_GLUCOSE_ISOMERASE_2"/>
    <property type="match status" value="1"/>
</dbReference>
<dbReference type="PROSITE" id="PS51463">
    <property type="entry name" value="P_GLUCOSE_ISOMERASE_3"/>
    <property type="match status" value="1"/>
</dbReference>
<evidence type="ECO:0000255" key="1">
    <source>
        <dbReference type="HAMAP-Rule" id="MF_00473"/>
    </source>
</evidence>
<proteinExistence type="inferred from homology"/>
<sequence>MLKNINPTQTQAWKALTAHFESAQDMDLKELFAQDAARFDKYSARFGSDILVDYSKNLINEETLKHLFALANETELKSAIEAMFSGEAINQTEGRAVLHTALRNRTNTPVMVDGEDVMPAVNAVLEKMKSFTDRVIGGEWKGYTGKAITDIVNIGIGGSDLGPYMVTEALAPYKNHLNLHFVSNVDGTHIVETLKKVNPETTLFLIASKTFTTQETMTNAHTARDWFLESAGDQAHVAKHFAALSTNATAVSEFGIDTANMFEFWDWVGGRYSLWSAIGLSIALAVGYDNFVELLDGAHEMDKHFVSTDLESNIPVILALIGIWYNNFHGAESEAILPYDQYMHRFAAYFQQGNMESNGKYVDREGNAVTYQTGPIIWGEPGTNGQHAFYQLIHQGTKLIPCDFIAPAISHNPAGDHHQKLMSNFFAQTEALAFGKSEETVKEELVKAGKNAEEVAAIAPFKVFEGNRPTNSILVKQITPRTLGNLIAMYEHKIFVQGVIWNIFSFDQWGVELGKQLANQILPELADASQINSHDSSTNGLINAFKAFKA</sequence>
<name>G6PI_VIBPA</name>
<keyword id="KW-0963">Cytoplasm</keyword>
<keyword id="KW-0312">Gluconeogenesis</keyword>
<keyword id="KW-0324">Glycolysis</keyword>
<keyword id="KW-0413">Isomerase</keyword>
<gene>
    <name evidence="1" type="primary">pgi</name>
    <name type="ordered locus">VP2731</name>
</gene>